<organism>
    <name type="scientific">Shewanella putrefaciens (strain CN-32 / ATCC BAA-453)</name>
    <dbReference type="NCBI Taxonomy" id="319224"/>
    <lineage>
        <taxon>Bacteria</taxon>
        <taxon>Pseudomonadati</taxon>
        <taxon>Pseudomonadota</taxon>
        <taxon>Gammaproteobacteria</taxon>
        <taxon>Alteromonadales</taxon>
        <taxon>Shewanellaceae</taxon>
        <taxon>Shewanella</taxon>
    </lineage>
</organism>
<keyword id="KW-0010">Activator</keyword>
<keyword id="KW-0067">ATP-binding</keyword>
<keyword id="KW-0238">DNA-binding</keyword>
<keyword id="KW-0347">Helicase</keyword>
<keyword id="KW-0378">Hydrolase</keyword>
<keyword id="KW-0547">Nucleotide-binding</keyword>
<keyword id="KW-0804">Transcription</keyword>
<keyword id="KW-0805">Transcription regulation</keyword>
<reference key="1">
    <citation type="submission" date="2007-04" db="EMBL/GenBank/DDBJ databases">
        <title>Complete sequence of Shewanella putrefaciens CN-32.</title>
        <authorList>
            <consortium name="US DOE Joint Genome Institute"/>
            <person name="Copeland A."/>
            <person name="Lucas S."/>
            <person name="Lapidus A."/>
            <person name="Barry K."/>
            <person name="Detter J.C."/>
            <person name="Glavina del Rio T."/>
            <person name="Hammon N."/>
            <person name="Israni S."/>
            <person name="Dalin E."/>
            <person name="Tice H."/>
            <person name="Pitluck S."/>
            <person name="Chain P."/>
            <person name="Malfatti S."/>
            <person name="Shin M."/>
            <person name="Vergez L."/>
            <person name="Schmutz J."/>
            <person name="Larimer F."/>
            <person name="Land M."/>
            <person name="Hauser L."/>
            <person name="Kyrpides N."/>
            <person name="Mikhailova N."/>
            <person name="Romine M.F."/>
            <person name="Fredrickson J."/>
            <person name="Tiedje J."/>
            <person name="Richardson P."/>
        </authorList>
    </citation>
    <scope>NUCLEOTIDE SEQUENCE [LARGE SCALE GENOMIC DNA]</scope>
    <source>
        <strain>CN-32 / ATCC BAA-453</strain>
    </source>
</reference>
<name>RAPA_SHEPC</name>
<feature type="chain" id="PRO_1000088386" description="RNA polymerase-associated protein RapA">
    <location>
        <begin position="1"/>
        <end position="968"/>
    </location>
</feature>
<feature type="domain" description="Helicase ATP-binding" evidence="1">
    <location>
        <begin position="163"/>
        <end position="332"/>
    </location>
</feature>
<feature type="domain" description="Helicase C-terminal" evidence="1">
    <location>
        <begin position="491"/>
        <end position="643"/>
    </location>
</feature>
<feature type="short sequence motif" description="DEAH box">
    <location>
        <begin position="278"/>
        <end position="281"/>
    </location>
</feature>
<feature type="binding site" evidence="1">
    <location>
        <begin position="176"/>
        <end position="183"/>
    </location>
    <ligand>
        <name>ATP</name>
        <dbReference type="ChEBI" id="CHEBI:30616"/>
    </ligand>
</feature>
<dbReference type="EC" id="3.6.4.-" evidence="1"/>
<dbReference type="EMBL" id="CP000681">
    <property type="protein sequence ID" value="ABP77014.1"/>
    <property type="molecule type" value="Genomic_DNA"/>
</dbReference>
<dbReference type="SMR" id="A4YAN1"/>
<dbReference type="STRING" id="319224.Sputcn32_3302"/>
<dbReference type="KEGG" id="spc:Sputcn32_3302"/>
<dbReference type="eggNOG" id="COG0553">
    <property type="taxonomic scope" value="Bacteria"/>
</dbReference>
<dbReference type="HOGENOM" id="CLU_011520_0_0_6"/>
<dbReference type="GO" id="GO:0005524">
    <property type="term" value="F:ATP binding"/>
    <property type="evidence" value="ECO:0007669"/>
    <property type="project" value="UniProtKB-UniRule"/>
</dbReference>
<dbReference type="GO" id="GO:0003677">
    <property type="term" value="F:DNA binding"/>
    <property type="evidence" value="ECO:0007669"/>
    <property type="project" value="UniProtKB-KW"/>
</dbReference>
<dbReference type="GO" id="GO:0004386">
    <property type="term" value="F:helicase activity"/>
    <property type="evidence" value="ECO:0007669"/>
    <property type="project" value="UniProtKB-UniRule"/>
</dbReference>
<dbReference type="GO" id="GO:0016817">
    <property type="term" value="F:hydrolase activity, acting on acid anhydrides"/>
    <property type="evidence" value="ECO:0007669"/>
    <property type="project" value="InterPro"/>
</dbReference>
<dbReference type="GO" id="GO:0006355">
    <property type="term" value="P:regulation of DNA-templated transcription"/>
    <property type="evidence" value="ECO:0007669"/>
    <property type="project" value="UniProtKB-UniRule"/>
</dbReference>
<dbReference type="CDD" id="cd18011">
    <property type="entry name" value="DEXDc_RapA"/>
    <property type="match status" value="1"/>
</dbReference>
<dbReference type="CDD" id="cd18793">
    <property type="entry name" value="SF2_C_SNF"/>
    <property type="match status" value="1"/>
</dbReference>
<dbReference type="Gene3D" id="2.30.30.140">
    <property type="match status" value="1"/>
</dbReference>
<dbReference type="Gene3D" id="2.30.30.930">
    <property type="match status" value="1"/>
</dbReference>
<dbReference type="Gene3D" id="3.30.360.80">
    <property type="match status" value="1"/>
</dbReference>
<dbReference type="Gene3D" id="6.10.140.1500">
    <property type="match status" value="1"/>
</dbReference>
<dbReference type="Gene3D" id="6.10.140.2230">
    <property type="match status" value="1"/>
</dbReference>
<dbReference type="Gene3D" id="3.40.50.300">
    <property type="entry name" value="P-loop containing nucleotide triphosphate hydrolases"/>
    <property type="match status" value="1"/>
</dbReference>
<dbReference type="Gene3D" id="3.40.50.10810">
    <property type="entry name" value="Tandem AAA-ATPase domain"/>
    <property type="match status" value="1"/>
</dbReference>
<dbReference type="HAMAP" id="MF_01821">
    <property type="entry name" value="Helicase_RapA"/>
    <property type="match status" value="1"/>
</dbReference>
<dbReference type="InterPro" id="IPR014001">
    <property type="entry name" value="Helicase_ATP-bd"/>
</dbReference>
<dbReference type="InterPro" id="IPR001650">
    <property type="entry name" value="Helicase_C-like"/>
</dbReference>
<dbReference type="InterPro" id="IPR023949">
    <property type="entry name" value="Helicase_RapA"/>
</dbReference>
<dbReference type="InterPro" id="IPR027417">
    <property type="entry name" value="P-loop_NTPase"/>
</dbReference>
<dbReference type="InterPro" id="IPR022737">
    <property type="entry name" value="RapA_C"/>
</dbReference>
<dbReference type="InterPro" id="IPR038718">
    <property type="entry name" value="SNF2-like_sf"/>
</dbReference>
<dbReference type="InterPro" id="IPR049730">
    <property type="entry name" value="SNF2/RAD54-like_C"/>
</dbReference>
<dbReference type="InterPro" id="IPR000330">
    <property type="entry name" value="SNF2_N"/>
</dbReference>
<dbReference type="InterPro" id="IPR040765">
    <property type="entry name" value="Tudor_1_RapA"/>
</dbReference>
<dbReference type="InterPro" id="IPR040766">
    <property type="entry name" value="Tudor_2_RapA"/>
</dbReference>
<dbReference type="NCBIfam" id="NF003426">
    <property type="entry name" value="PRK04914.1"/>
    <property type="match status" value="1"/>
</dbReference>
<dbReference type="PANTHER" id="PTHR45766">
    <property type="entry name" value="DNA ANNEALING HELICASE AND ENDONUCLEASE ZRANB3 FAMILY MEMBER"/>
    <property type="match status" value="1"/>
</dbReference>
<dbReference type="PANTHER" id="PTHR45766:SF6">
    <property type="entry name" value="SWI_SNF-RELATED MATRIX-ASSOCIATED ACTIN-DEPENDENT REGULATOR OF CHROMATIN SUBFAMILY A-LIKE PROTEIN 1"/>
    <property type="match status" value="1"/>
</dbReference>
<dbReference type="Pfam" id="PF00271">
    <property type="entry name" value="Helicase_C"/>
    <property type="match status" value="1"/>
</dbReference>
<dbReference type="Pfam" id="PF12137">
    <property type="entry name" value="RapA_C"/>
    <property type="match status" value="1"/>
</dbReference>
<dbReference type="Pfam" id="PF00176">
    <property type="entry name" value="SNF2-rel_dom"/>
    <property type="match status" value="1"/>
</dbReference>
<dbReference type="Pfam" id="PF18339">
    <property type="entry name" value="Tudor_1_RapA"/>
    <property type="match status" value="1"/>
</dbReference>
<dbReference type="Pfam" id="PF18337">
    <property type="entry name" value="Tudor_RapA"/>
    <property type="match status" value="1"/>
</dbReference>
<dbReference type="SMART" id="SM00487">
    <property type="entry name" value="DEXDc"/>
    <property type="match status" value="1"/>
</dbReference>
<dbReference type="SMART" id="SM00490">
    <property type="entry name" value="HELICc"/>
    <property type="match status" value="1"/>
</dbReference>
<dbReference type="SUPFAM" id="SSF52540">
    <property type="entry name" value="P-loop containing nucleoside triphosphate hydrolases"/>
    <property type="match status" value="2"/>
</dbReference>
<dbReference type="PROSITE" id="PS51192">
    <property type="entry name" value="HELICASE_ATP_BIND_1"/>
    <property type="match status" value="1"/>
</dbReference>
<dbReference type="PROSITE" id="PS51194">
    <property type="entry name" value="HELICASE_CTER"/>
    <property type="match status" value="1"/>
</dbReference>
<evidence type="ECO:0000255" key="1">
    <source>
        <dbReference type="HAMAP-Rule" id="MF_01821"/>
    </source>
</evidence>
<proteinExistence type="inferred from homology"/>
<gene>
    <name evidence="1" type="primary">rapA</name>
    <name type="ordered locus">Sputcn32_3302</name>
</gene>
<accession>A4YAN1</accession>
<comment type="function">
    <text evidence="1">Transcription regulator that activates transcription by stimulating RNA polymerase (RNAP) recycling in case of stress conditions such as supercoiled DNA or high salt concentrations. Probably acts by releasing the RNAP, when it is trapped or immobilized on tightly supercoiled DNA. Does not activate transcription on linear DNA. Probably not involved in DNA repair.</text>
</comment>
<comment type="subunit">
    <text evidence="1">Interacts with the RNAP. Has a higher affinity for the core RNAP than for the holoenzyme. Its ATPase activity is stimulated by binding to RNAP.</text>
</comment>
<comment type="similarity">
    <text evidence="1">Belongs to the SNF2/RAD54 helicase family. RapA subfamily.</text>
</comment>
<sequence length="968" mass="109087">MPFALGQRWISDTESELGLGTVVQVEGRMVTVLFPATGENRMFSRAEAPLTRVTYNSGDTVESHEGWSLTIEELTEKDGLVIYHGIHSETGEQVTLRETLLNHNIRFNKPQDRLFAGQIDRLDRFGVRYQCQMLRHKLATSDLLGLQGPRVGLIPHQMWIAHEVGRRYAPRVLLADEVGLGKTIEAGLIIHQQLLTGRAERVLVIVPDTLRHQWLVEMLRRFNLRFSVFDEDRCVEAYADHDNPFYTEQLVICSLELLRKKKRLDQALDADWDLLVVDEAHHLEWTEEAPSRAYQVVEALSEVVPGVLLLTATPDQLGHESHFARLRLLDPDRFYDYDAFLAEEDSYKDVAMAAEALAGNAKLPDAAINSLTELLSEKDIAPSIRLIQADGIDSELQQAARSELLQELLDRHGTGRVLYRNSRASVKGFPKRFFNPHPQTMPEQYLTAARVSSMMGGHKTLEAKAAQALSPEKLYQEFEDNSASWWKFDPRVDWLIAFLKSHRSKKVLIIASQAETALSLEEALRTREGIQATVFHEGMSIIERDKAGAYFAQEEGGAQALICSEIGSEGRNFQFASHLVLFDLPLNPDLLEQRIGRLDRIGQKNDIQIHLPYLEDTAQERLMQWYHQGLNAFELTCPSGHVLYAEFAEDLLNVLVGDDADELTNLLNHTQTRYKELKHAMEQGRDKLLEINSHGGDRAKAIVERLAQNDENTQLIGSVIRLWDIIGVDQEDKGENSIILRPSEHMMFPTYPGLPEDGVTVTFDRDTALSRDDIALITQEHPLVQTGLDLITGSETGTTSVAVLKNKALPAGTLFLELIYMADASAPKSSQLYRYLPPTPIRILLDKNGNDLSAKVDYASFDKQLSAVNRHIGGKLVTASQPILHPLFAKGEEYAQAAVDELVIQAREKMTTQLTGELDRLESLKAVNPNIREEELEYLRNQMQELNTYLDASQLQLDAIRMVLVSHV</sequence>
<protein>
    <recommendedName>
        <fullName evidence="1">RNA polymerase-associated protein RapA</fullName>
        <ecNumber evidence="1">3.6.4.-</ecNumber>
    </recommendedName>
    <alternativeName>
        <fullName evidence="1">ATP-dependent helicase HepA</fullName>
    </alternativeName>
</protein>